<proteinExistence type="evidence at protein level"/>
<feature type="chain" id="PRO_0000144818" description="A-type ATP synthase subunit F">
    <location>
        <begin position="1"/>
        <end position="98"/>
    </location>
</feature>
<protein>
    <recommendedName>
        <fullName evidence="1 6">A-type ATP synthase subunit F</fullName>
    </recommendedName>
    <alternativeName>
        <fullName evidence="4">A1A0-type ATP synthase subunit F</fullName>
    </alternativeName>
</protein>
<keyword id="KW-0066">ATP synthesis</keyword>
<keyword id="KW-1003">Cell membrane</keyword>
<keyword id="KW-0903">Direct protein sequencing</keyword>
<keyword id="KW-0375">Hydrogen ion transport</keyword>
<keyword id="KW-0406">Ion transport</keyword>
<keyword id="KW-0472">Membrane</keyword>
<keyword id="KW-1185">Reference proteome</keyword>
<keyword id="KW-0813">Transport</keyword>
<sequence>MKVGVVGDRETAIGFRLAGLTDVYEVKNDEEAVKAINELANNENIAFIIITERIAESIKDKLKNINKVIVEIPDKHGKLERIDPVKELIRKAIGVSMK</sequence>
<evidence type="ECO:0000255" key="1">
    <source>
        <dbReference type="HAMAP-Rule" id="MF_00312"/>
    </source>
</evidence>
<evidence type="ECO:0000269" key="2">
    <source>
    </source>
</evidence>
<evidence type="ECO:0000269" key="3">
    <source>
    </source>
</evidence>
<evidence type="ECO:0000303" key="4">
    <source>
    </source>
</evidence>
<evidence type="ECO:0000303" key="5">
    <source>
    </source>
</evidence>
<evidence type="ECO:0000305" key="6"/>
<evidence type="ECO:0000305" key="7">
    <source>
    </source>
</evidence>
<evidence type="ECO:0000305" key="8">
    <source>
    </source>
</evidence>
<name>AATF_METJA</name>
<dbReference type="EMBL" id="L77117">
    <property type="protein sequence ID" value="AAB98201.1"/>
    <property type="molecule type" value="Genomic_DNA"/>
</dbReference>
<dbReference type="PIR" id="C64327">
    <property type="entry name" value="C64327"/>
</dbReference>
<dbReference type="RefSeq" id="WP_010869714.1">
    <property type="nucleotide sequence ID" value="NC_000909.1"/>
</dbReference>
<dbReference type="SMR" id="Q57671"/>
<dbReference type="FunCoup" id="Q57671">
    <property type="interactions" value="46"/>
</dbReference>
<dbReference type="STRING" id="243232.MJ_0218"/>
<dbReference type="PaxDb" id="243232-MJ_0218"/>
<dbReference type="EnsemblBacteria" id="AAB98201">
    <property type="protein sequence ID" value="AAB98201"/>
    <property type="gene ID" value="MJ_0218"/>
</dbReference>
<dbReference type="GeneID" id="8803838"/>
<dbReference type="KEGG" id="mja:MJ_0218"/>
<dbReference type="eggNOG" id="arCOG04102">
    <property type="taxonomic scope" value="Archaea"/>
</dbReference>
<dbReference type="HOGENOM" id="CLU_135754_2_2_2"/>
<dbReference type="InParanoid" id="Q57671"/>
<dbReference type="OrthoDB" id="24971at2157"/>
<dbReference type="PhylomeDB" id="Q57671"/>
<dbReference type="Proteomes" id="UP000000805">
    <property type="component" value="Chromosome"/>
</dbReference>
<dbReference type="GO" id="GO:0016020">
    <property type="term" value="C:membrane"/>
    <property type="evidence" value="ECO:0000318"/>
    <property type="project" value="GO_Central"/>
</dbReference>
<dbReference type="GO" id="GO:0005886">
    <property type="term" value="C:plasma membrane"/>
    <property type="evidence" value="ECO:0007669"/>
    <property type="project" value="UniProtKB-SubCell"/>
</dbReference>
<dbReference type="GO" id="GO:0005524">
    <property type="term" value="F:ATP binding"/>
    <property type="evidence" value="ECO:0007669"/>
    <property type="project" value="UniProtKB-UniRule"/>
</dbReference>
<dbReference type="GO" id="GO:0046933">
    <property type="term" value="F:proton-transporting ATP synthase activity, rotational mechanism"/>
    <property type="evidence" value="ECO:0007669"/>
    <property type="project" value="UniProtKB-UniRule"/>
</dbReference>
<dbReference type="GO" id="GO:0046961">
    <property type="term" value="F:proton-transporting ATPase activity, rotational mechanism"/>
    <property type="evidence" value="ECO:0007669"/>
    <property type="project" value="InterPro"/>
</dbReference>
<dbReference type="GO" id="GO:0042777">
    <property type="term" value="P:proton motive force-driven plasma membrane ATP synthesis"/>
    <property type="evidence" value="ECO:0007669"/>
    <property type="project" value="UniProtKB-UniRule"/>
</dbReference>
<dbReference type="FunFam" id="3.40.50.10580:FF:000008">
    <property type="entry name" value="V-type ATP synthase subunit F"/>
    <property type="match status" value="1"/>
</dbReference>
<dbReference type="Gene3D" id="3.40.50.10580">
    <property type="entry name" value="ATPase, V1 complex, subunit F"/>
    <property type="match status" value="1"/>
</dbReference>
<dbReference type="HAMAP" id="MF_00312">
    <property type="entry name" value="ATP_synth_F_arch"/>
    <property type="match status" value="1"/>
</dbReference>
<dbReference type="InterPro" id="IPR008218">
    <property type="entry name" value="ATPase_V1-cplx_f_g_su"/>
</dbReference>
<dbReference type="InterPro" id="IPR022944">
    <property type="entry name" value="ATPase_V1-cplx_fsu_bac/arc"/>
</dbReference>
<dbReference type="InterPro" id="IPR036906">
    <property type="entry name" value="ATPase_V1_fsu_sf"/>
</dbReference>
<dbReference type="NCBIfam" id="NF003047">
    <property type="entry name" value="PRK03957.1"/>
    <property type="match status" value="1"/>
</dbReference>
<dbReference type="Pfam" id="PF01990">
    <property type="entry name" value="ATP-synt_F"/>
    <property type="match status" value="1"/>
</dbReference>
<dbReference type="SUPFAM" id="SSF159468">
    <property type="entry name" value="AtpF-like"/>
    <property type="match status" value="1"/>
</dbReference>
<reference key="1">
    <citation type="journal article" date="1996" name="Science">
        <title>Complete genome sequence of the methanogenic archaeon, Methanococcus jannaschii.</title>
        <authorList>
            <person name="Bult C.J."/>
            <person name="White O."/>
            <person name="Olsen G.J."/>
            <person name="Zhou L."/>
            <person name="Fleischmann R.D."/>
            <person name="Sutton G.G."/>
            <person name="Blake J.A."/>
            <person name="FitzGerald L.M."/>
            <person name="Clayton R.A."/>
            <person name="Gocayne J.D."/>
            <person name="Kerlavage A.R."/>
            <person name="Dougherty B.A."/>
            <person name="Tomb J.-F."/>
            <person name="Adams M.D."/>
            <person name="Reich C.I."/>
            <person name="Overbeek R."/>
            <person name="Kirkness E.F."/>
            <person name="Weinstock K.G."/>
            <person name="Merrick J.M."/>
            <person name="Glodek A."/>
            <person name="Scott J.L."/>
            <person name="Geoghagen N.S.M."/>
            <person name="Weidman J.F."/>
            <person name="Fuhrmann J.L."/>
            <person name="Nguyen D."/>
            <person name="Utterback T.R."/>
            <person name="Kelley J.M."/>
            <person name="Peterson J.D."/>
            <person name="Sadow P.W."/>
            <person name="Hanna M.C."/>
            <person name="Cotton M.D."/>
            <person name="Roberts K.M."/>
            <person name="Hurst M.A."/>
            <person name="Kaine B.P."/>
            <person name="Borodovsky M."/>
            <person name="Klenk H.-P."/>
            <person name="Fraser C.M."/>
            <person name="Smith H.O."/>
            <person name="Woese C.R."/>
            <person name="Venter J.C."/>
        </authorList>
    </citation>
    <scope>NUCLEOTIDE SEQUENCE [LARGE SCALE GENOMIC DNA]</scope>
    <source>
        <strain>ATCC 43067 / DSM 2661 / JAL-1 / JCM 10045 / NBRC 100440</strain>
    </source>
</reference>
<reference key="2">
    <citation type="journal article" date="2003" name="Extremophiles">
        <title>Isolation of a complete A1AO ATP synthase comprising nine subunits from the hyperthermophile Methanococcus jannaschii.</title>
        <authorList>
            <person name="Lingl A."/>
            <person name="Huber H."/>
            <person name="Stetter K.O."/>
            <person name="Mayer F."/>
            <person name="Kellermann J."/>
            <person name="Mueller V."/>
        </authorList>
    </citation>
    <scope>PROTEIN SEQUENCE OF 1-6</scope>
    <scope>FUNCTION</scope>
    <scope>BIOPHYSICOCHEMICAL PROPERTIES</scope>
    <scope>SUBUNIT</scope>
    <scope>SUBCELLULAR LOCATION</scope>
    <scope>DOMAIN</scope>
    <source>
        <strain>ATCC 43067 / DSM 2661 / JAL-1 / JCM 10045 / NBRC 100440</strain>
    </source>
</reference>
<reference key="3">
    <citation type="journal article" date="2004" name="J. Biol. Chem.">
        <title>Structure and subunit arrangement of the A-type ATP synthase complex from the archaeon Methanococcus jannaschii visualized by electron microscopy.</title>
        <authorList>
            <person name="Coskun U."/>
            <person name="Chaban Y.L."/>
            <person name="Lingl A."/>
            <person name="Mueller V."/>
            <person name="Keegstra W."/>
            <person name="Boekema E.J."/>
            <person name="Grueber G."/>
        </authorList>
    </citation>
    <scope>STRUCTURE BY ELECTRON MICROSCOPY (18 ANGSTROMS) OF A-TYPE ATP SYNTHASE</scope>
    <scope>SUBUNIT</scope>
    <scope>SUBCELLULAR LOCATION</scope>
    <scope>DOMAIN</scope>
    <source>
        <strain>ATCC 43067 / DSM 2661 / JAL-1 / JCM 10045 / NBRC 100440</strain>
    </source>
</reference>
<accession>Q57671</accession>
<organism>
    <name type="scientific">Methanocaldococcus jannaschii (strain ATCC 43067 / DSM 2661 / JAL-1 / JCM 10045 / NBRC 100440)</name>
    <name type="common">Methanococcus jannaschii</name>
    <dbReference type="NCBI Taxonomy" id="243232"/>
    <lineage>
        <taxon>Archaea</taxon>
        <taxon>Methanobacteriati</taxon>
        <taxon>Methanobacteriota</taxon>
        <taxon>Methanomada group</taxon>
        <taxon>Methanococci</taxon>
        <taxon>Methanococcales</taxon>
        <taxon>Methanocaldococcaceae</taxon>
        <taxon>Methanocaldococcus</taxon>
    </lineage>
</organism>
<gene>
    <name evidence="1 5" type="primary">atpF</name>
    <name type="ordered locus">MJ0218</name>
</gene>
<comment type="function">
    <text evidence="1 7">Component of the A-type ATP synthase that produces ATP from ADP in the presence of a proton gradient across the membrane.</text>
</comment>
<comment type="biophysicochemical properties">
    <phDependence>
        <text evidence="2">Optimum pH is 6.0 for ATP hydrolysis.</text>
    </phDependence>
    <temperatureDependence>
        <text evidence="2">Optimum temperature is 80 degrees Celsius.</text>
    </temperatureDependence>
</comment>
<comment type="subunit">
    <text evidence="2 3">The A-type ATPase is composed of subunits A(3), B(3), C, D, E(1 or 2), F, H(2), I and K(x) (PubMed:12768457, PubMed:15220347).</text>
</comment>
<comment type="subcellular location">
    <subcellularLocation>
        <location evidence="1 2 3">Cell membrane</location>
        <topology evidence="1 2 3">Peripheral membrane protein</topology>
        <orientation evidence="7 8">Cytoplasmic side</orientation>
    </subcellularLocation>
</comment>
<comment type="domain">
    <text evidence="2 3">Purified ATP synthase is 25.9 nm long. The hydrophilic A1 domain is 9.4 X 11.5 nm, the central stalk is 8.0 X 3.9 nm and the membrane-bound A0 domain is 6.4 X 10.6 nm; the domains are connected by two stalks. ATP is synthesized or hydrolyzed by the A1 domain while ion translocation occurs via the A0 domain.</text>
</comment>
<comment type="similarity">
    <text evidence="1">Belongs to the V-ATPase F subunit family.</text>
</comment>